<feature type="chain" id="PRO_0000428947" description="Glycerol kinase">
    <location>
        <begin position="1"/>
        <end position="510"/>
    </location>
</feature>
<feature type="binding site" evidence="1">
    <location>
        <position position="14"/>
    </location>
    <ligand>
        <name>ADP</name>
        <dbReference type="ChEBI" id="CHEBI:456216"/>
    </ligand>
</feature>
<feature type="binding site" evidence="1">
    <location>
        <position position="14"/>
    </location>
    <ligand>
        <name>ATP</name>
        <dbReference type="ChEBI" id="CHEBI:30616"/>
    </ligand>
</feature>
<feature type="binding site" evidence="1">
    <location>
        <position position="14"/>
    </location>
    <ligand>
        <name>sn-glycerol 3-phosphate</name>
        <dbReference type="ChEBI" id="CHEBI:57597"/>
    </ligand>
</feature>
<feature type="binding site" evidence="1">
    <location>
        <position position="15"/>
    </location>
    <ligand>
        <name>ATP</name>
        <dbReference type="ChEBI" id="CHEBI:30616"/>
    </ligand>
</feature>
<feature type="binding site" evidence="1">
    <location>
        <position position="18"/>
    </location>
    <ligand>
        <name>ADP</name>
        <dbReference type="ChEBI" id="CHEBI:456216"/>
    </ligand>
</feature>
<feature type="binding site" evidence="1">
    <location>
        <position position="84"/>
    </location>
    <ligand>
        <name>glycerol</name>
        <dbReference type="ChEBI" id="CHEBI:17754"/>
    </ligand>
</feature>
<feature type="binding site" evidence="1">
    <location>
        <position position="84"/>
    </location>
    <ligand>
        <name>sn-glycerol 3-phosphate</name>
        <dbReference type="ChEBI" id="CHEBI:57597"/>
    </ligand>
</feature>
<feature type="binding site" evidence="1">
    <location>
        <position position="85"/>
    </location>
    <ligand>
        <name>glycerol</name>
        <dbReference type="ChEBI" id="CHEBI:17754"/>
    </ligand>
</feature>
<feature type="binding site" evidence="1">
    <location>
        <position position="85"/>
    </location>
    <ligand>
        <name>sn-glycerol 3-phosphate</name>
        <dbReference type="ChEBI" id="CHEBI:57597"/>
    </ligand>
</feature>
<feature type="binding site" evidence="1">
    <location>
        <position position="136"/>
    </location>
    <ligand>
        <name>glycerol</name>
        <dbReference type="ChEBI" id="CHEBI:17754"/>
    </ligand>
</feature>
<feature type="binding site" evidence="1">
    <location>
        <position position="136"/>
    </location>
    <ligand>
        <name>sn-glycerol 3-phosphate</name>
        <dbReference type="ChEBI" id="CHEBI:57597"/>
    </ligand>
</feature>
<feature type="binding site" evidence="1">
    <location>
        <position position="256"/>
    </location>
    <ligand>
        <name>glycerol</name>
        <dbReference type="ChEBI" id="CHEBI:17754"/>
    </ligand>
</feature>
<feature type="binding site" evidence="1">
    <location>
        <position position="256"/>
    </location>
    <ligand>
        <name>sn-glycerol 3-phosphate</name>
        <dbReference type="ChEBI" id="CHEBI:57597"/>
    </ligand>
</feature>
<feature type="binding site" evidence="1">
    <location>
        <position position="257"/>
    </location>
    <ligand>
        <name>glycerol</name>
        <dbReference type="ChEBI" id="CHEBI:17754"/>
    </ligand>
</feature>
<feature type="binding site" evidence="1">
    <location>
        <position position="278"/>
    </location>
    <ligand>
        <name>ADP</name>
        <dbReference type="ChEBI" id="CHEBI:456216"/>
    </ligand>
</feature>
<feature type="binding site" evidence="1">
    <location>
        <position position="278"/>
    </location>
    <ligand>
        <name>ATP</name>
        <dbReference type="ChEBI" id="CHEBI:30616"/>
    </ligand>
</feature>
<feature type="binding site" evidence="1">
    <location>
        <position position="322"/>
    </location>
    <ligand>
        <name>ADP</name>
        <dbReference type="ChEBI" id="CHEBI:456216"/>
    </ligand>
</feature>
<feature type="binding site" evidence="1">
    <location>
        <position position="322"/>
    </location>
    <ligand>
        <name>ATP</name>
        <dbReference type="ChEBI" id="CHEBI:30616"/>
    </ligand>
</feature>
<feature type="binding site" evidence="1">
    <location>
        <position position="422"/>
    </location>
    <ligand>
        <name>ADP</name>
        <dbReference type="ChEBI" id="CHEBI:456216"/>
    </ligand>
</feature>
<feature type="binding site" evidence="1">
    <location>
        <position position="422"/>
    </location>
    <ligand>
        <name>ATP</name>
        <dbReference type="ChEBI" id="CHEBI:30616"/>
    </ligand>
</feature>
<feature type="binding site" evidence="1">
    <location>
        <position position="426"/>
    </location>
    <ligand>
        <name>ADP</name>
        <dbReference type="ChEBI" id="CHEBI:456216"/>
    </ligand>
</feature>
<keyword id="KW-0067">ATP-binding</keyword>
<keyword id="KW-0319">Glycerol metabolism</keyword>
<keyword id="KW-0418">Kinase</keyword>
<keyword id="KW-0547">Nucleotide-binding</keyword>
<keyword id="KW-1185">Reference proteome</keyword>
<keyword id="KW-0808">Transferase</keyword>
<organism>
    <name type="scientific">Haloferax volcanii (strain ATCC 29605 / DSM 3757 / JCM 8879 / NBRC 14742 / NCIMB 2012 / VKM B-1768 / DS2)</name>
    <name type="common">Halobacterium volcanii</name>
    <dbReference type="NCBI Taxonomy" id="309800"/>
    <lineage>
        <taxon>Archaea</taxon>
        <taxon>Methanobacteriati</taxon>
        <taxon>Methanobacteriota</taxon>
        <taxon>Stenosarchaea group</taxon>
        <taxon>Halobacteria</taxon>
        <taxon>Halobacteriales</taxon>
        <taxon>Haloferacaceae</taxon>
        <taxon>Haloferax</taxon>
    </lineage>
</organism>
<name>GLPK_HALVD</name>
<comment type="function">
    <text evidence="1 2 3">Key enzyme in the regulation of glycerol uptake and metabolism. Catalyzes the phosphorylation of glycerol to yield sn-glycerol 3-phosphate. It also catalyzes the phosphorylation of dihydroxyacetone (DHA). Involved, together with the DHA kinase DhaKLM, in the metabolism of DHA.</text>
</comment>
<comment type="catalytic activity">
    <reaction evidence="1">
        <text>glycerol + ATP = sn-glycerol 3-phosphate + ADP + H(+)</text>
        <dbReference type="Rhea" id="RHEA:21644"/>
        <dbReference type="ChEBI" id="CHEBI:15378"/>
        <dbReference type="ChEBI" id="CHEBI:17754"/>
        <dbReference type="ChEBI" id="CHEBI:30616"/>
        <dbReference type="ChEBI" id="CHEBI:57597"/>
        <dbReference type="ChEBI" id="CHEBI:456216"/>
        <dbReference type="EC" id="2.7.1.30"/>
    </reaction>
</comment>
<comment type="pathway">
    <text evidence="1">Polyol metabolism; glycerol degradation via glycerol kinase pathway; sn-glycerol 3-phosphate from glycerol: step 1/1.</text>
</comment>
<comment type="induction">
    <text evidence="2">By glycerol. Not subjected to glucose catabolite repression.</text>
</comment>
<comment type="disruption phenotype">
    <text evidence="2 3">Incapable of growth on glycerol. Causes a reduction in growth on dihydroxyacetone.</text>
</comment>
<comment type="similarity">
    <text evidence="1">Belongs to the FGGY kinase family.</text>
</comment>
<evidence type="ECO:0000255" key="1">
    <source>
        <dbReference type="HAMAP-Rule" id="MF_00186"/>
    </source>
</evidence>
<evidence type="ECO:0000269" key="2">
    <source>
    </source>
</evidence>
<evidence type="ECO:0000269" key="3">
    <source>
    </source>
</evidence>
<proteinExistence type="evidence at transcript level"/>
<protein>
    <recommendedName>
        <fullName evidence="1">Glycerol kinase</fullName>
        <ecNumber evidence="1">2.7.1.30</ecNumber>
    </recommendedName>
    <alternativeName>
        <fullName evidence="1">ATP:glycerol 3-phosphotransferase</fullName>
    </alternativeName>
    <alternativeName>
        <fullName evidence="1">Glycerokinase</fullName>
    </alternativeName>
</protein>
<gene>
    <name evidence="1" type="primary">glpK</name>
    <name type="ordered locus">HVO_1541</name>
    <name type="ORF">C498_03060</name>
</gene>
<accession>D4GYI5</accession>
<reference key="1">
    <citation type="journal article" date="2010" name="PLoS ONE">
        <title>The complete genome sequence of Haloferax volcanii DS2, a model archaeon.</title>
        <authorList>
            <person name="Hartman A.L."/>
            <person name="Norais C."/>
            <person name="Badger J.H."/>
            <person name="Delmas S."/>
            <person name="Haldenby S."/>
            <person name="Madupu R."/>
            <person name="Robinson J."/>
            <person name="Khouri H."/>
            <person name="Ren Q."/>
            <person name="Lowe T.M."/>
            <person name="Maupin-Furlow J."/>
            <person name="Pohlschroder M."/>
            <person name="Daniels C."/>
            <person name="Pfeiffer F."/>
            <person name="Allers T."/>
            <person name="Eisen J.A."/>
        </authorList>
    </citation>
    <scope>NUCLEOTIDE SEQUENCE [LARGE SCALE GENOMIC DNA]</scope>
    <source>
        <strain>ATCC 29605 / DSM 3757 / JCM 8879 / NBRC 14742 / NCIMB 2012 / VKM B-1768 / DS2</strain>
    </source>
</reference>
<reference key="2">
    <citation type="journal article" date="2014" name="PLoS Genet.">
        <title>Phylogenetically driven sequencing of extremely halophilic archaea reveals strategies for static and dynamic osmo-response.</title>
        <authorList>
            <person name="Becker E.A."/>
            <person name="Seitzer P.M."/>
            <person name="Tritt A."/>
            <person name="Larsen D."/>
            <person name="Krusor M."/>
            <person name="Yao A.I."/>
            <person name="Wu D."/>
            <person name="Madern D."/>
            <person name="Eisen J.A."/>
            <person name="Darling A.E."/>
            <person name="Facciotti M.T."/>
        </authorList>
    </citation>
    <scope>NUCLEOTIDE SEQUENCE [LARGE SCALE GENOMIC DNA]</scope>
    <source>
        <strain>ATCC 29605 / DSM 3757 / JCM 8879 / NBRC 14742 / NCIMB 2012 / VKM B-1768 / DS2</strain>
    </source>
</reference>
<reference key="3">
    <citation type="journal article" date="2009" name="J. Bacteriol.">
        <title>Glycerol-mediated repression of glucose metabolism and glycerol kinase as the sole route of glycerol catabolism in the haloarchaeon Haloferax volcanii.</title>
        <authorList>
            <person name="Sherwood K.E."/>
            <person name="Cano D.J."/>
            <person name="Maupin-Furlow J.A."/>
        </authorList>
    </citation>
    <scope>FUNCTION</scope>
    <scope>DISRUPTION PHENOTYPE</scope>
    <scope>INDUCTION</scope>
    <source>
        <strain>DS2 / DS70</strain>
    </source>
</reference>
<reference key="4">
    <citation type="journal article" date="2013" name="Front. Microbiol.">
        <title>Dihydroxyacetone metabolism in Haloferax volcanii.</title>
        <authorList>
            <person name="Ouellette M."/>
            <person name="Makkay A.M."/>
            <person name="Papke R.T."/>
        </authorList>
    </citation>
    <scope>FUNCTION</scope>
    <scope>DISRUPTION PHENOTYPE</scope>
    <source>
        <strain>DS2 / DS70</strain>
    </source>
</reference>
<sequence>MSGETYVGAIDQGTTGTRFMVFDHDGKVVANAYEKHEQIYPEPGWVEHDANEIWDNTKQVIDAALSSAGLDAEQLEAIGITNQRETTLVWDRETGQPIHNAIVWQDRRTTDRIETLEAEGKTDDVRAKTGLEPDAYFSATKAEWLLDNSDPIKLQRSRPEDIRDRAADGELAFGTIDTWLIYNLTGNHITDVTNASRTMLFNIHDMEWDDELLDEFNVPRELLPEVRPSSDDDYYGTTDADGFLGAEVPVAGALGDQQAALFGQTCFDAGDAKNTYGTGSFMLMNTGDEAVMSEHGLLTTVGFQRSGEPVQYALEGSIFITGAAIEWLEDMTLIDNAAESEKLARSVESTDGVYFVPAFTGLGAPHWDQRARGTIVGMTRGTRREHIVRATLESIAFQTRDVAEAMESDSEIDLSSLRVDGGAVKNNFLCQLQSNILDTEIVRPQVDETTALGAAYAAGLAVGYWETLDELRENWQVDREFAPKDPQNVEHRYGRWKEAVDRSLDWAREE</sequence>
<dbReference type="EC" id="2.7.1.30" evidence="1"/>
<dbReference type="EMBL" id="CP001956">
    <property type="protein sequence ID" value="ADE04400.1"/>
    <property type="molecule type" value="Genomic_DNA"/>
</dbReference>
<dbReference type="EMBL" id="AOHU01000028">
    <property type="protein sequence ID" value="ELY35766.1"/>
    <property type="molecule type" value="Genomic_DNA"/>
</dbReference>
<dbReference type="RefSeq" id="WP_004041419.1">
    <property type="nucleotide sequence ID" value="NC_013967.1"/>
</dbReference>
<dbReference type="SMR" id="D4GYI5"/>
<dbReference type="STRING" id="309800.HVO_1541"/>
<dbReference type="PaxDb" id="309800-C498_03060"/>
<dbReference type="EnsemblBacteria" id="ADE04400">
    <property type="protein sequence ID" value="ADE04400"/>
    <property type="gene ID" value="HVO_1541"/>
</dbReference>
<dbReference type="GeneID" id="8926676"/>
<dbReference type="KEGG" id="hvo:HVO_1541"/>
<dbReference type="PATRIC" id="fig|309800.29.peg.590"/>
<dbReference type="eggNOG" id="arCOG00024">
    <property type="taxonomic scope" value="Archaea"/>
</dbReference>
<dbReference type="HOGENOM" id="CLU_009281_2_3_2"/>
<dbReference type="OrthoDB" id="26592at2157"/>
<dbReference type="UniPathway" id="UPA00618">
    <property type="reaction ID" value="UER00672"/>
</dbReference>
<dbReference type="Proteomes" id="UP000008243">
    <property type="component" value="Chromosome"/>
</dbReference>
<dbReference type="Proteomes" id="UP000011532">
    <property type="component" value="Unassembled WGS sequence"/>
</dbReference>
<dbReference type="GO" id="GO:0005829">
    <property type="term" value="C:cytosol"/>
    <property type="evidence" value="ECO:0007669"/>
    <property type="project" value="TreeGrafter"/>
</dbReference>
<dbReference type="GO" id="GO:0005524">
    <property type="term" value="F:ATP binding"/>
    <property type="evidence" value="ECO:0007669"/>
    <property type="project" value="UniProtKB-UniRule"/>
</dbReference>
<dbReference type="GO" id="GO:0004370">
    <property type="term" value="F:glycerol kinase activity"/>
    <property type="evidence" value="ECO:0007669"/>
    <property type="project" value="UniProtKB-UniRule"/>
</dbReference>
<dbReference type="GO" id="GO:0019563">
    <property type="term" value="P:glycerol catabolic process"/>
    <property type="evidence" value="ECO:0007669"/>
    <property type="project" value="UniProtKB-UniRule"/>
</dbReference>
<dbReference type="GO" id="GO:0006072">
    <property type="term" value="P:glycerol-3-phosphate metabolic process"/>
    <property type="evidence" value="ECO:0007669"/>
    <property type="project" value="InterPro"/>
</dbReference>
<dbReference type="CDD" id="cd07769">
    <property type="entry name" value="ASKHA_NBD_FGGY_GK"/>
    <property type="match status" value="1"/>
</dbReference>
<dbReference type="FunFam" id="3.30.420.40:FF:000007">
    <property type="entry name" value="Glycerol kinase"/>
    <property type="match status" value="1"/>
</dbReference>
<dbReference type="FunFam" id="3.30.420.40:FF:000008">
    <property type="entry name" value="Glycerol kinase"/>
    <property type="match status" value="1"/>
</dbReference>
<dbReference type="Gene3D" id="3.30.420.40">
    <property type="match status" value="2"/>
</dbReference>
<dbReference type="HAMAP" id="MF_00186">
    <property type="entry name" value="Glycerol_kin"/>
    <property type="match status" value="1"/>
</dbReference>
<dbReference type="InterPro" id="IPR043129">
    <property type="entry name" value="ATPase_NBD"/>
</dbReference>
<dbReference type="InterPro" id="IPR000577">
    <property type="entry name" value="Carb_kinase_FGGY"/>
</dbReference>
<dbReference type="InterPro" id="IPR018483">
    <property type="entry name" value="Carb_kinase_FGGY_CS"/>
</dbReference>
<dbReference type="InterPro" id="IPR018485">
    <property type="entry name" value="FGGY_C"/>
</dbReference>
<dbReference type="InterPro" id="IPR018484">
    <property type="entry name" value="FGGY_N"/>
</dbReference>
<dbReference type="InterPro" id="IPR005999">
    <property type="entry name" value="Glycerol_kin"/>
</dbReference>
<dbReference type="NCBIfam" id="TIGR01311">
    <property type="entry name" value="glycerol_kin"/>
    <property type="match status" value="1"/>
</dbReference>
<dbReference type="NCBIfam" id="NF000756">
    <property type="entry name" value="PRK00047.1"/>
    <property type="match status" value="1"/>
</dbReference>
<dbReference type="PANTHER" id="PTHR10196:SF69">
    <property type="entry name" value="GLYCEROL KINASE"/>
    <property type="match status" value="1"/>
</dbReference>
<dbReference type="PANTHER" id="PTHR10196">
    <property type="entry name" value="SUGAR KINASE"/>
    <property type="match status" value="1"/>
</dbReference>
<dbReference type="Pfam" id="PF02782">
    <property type="entry name" value="FGGY_C"/>
    <property type="match status" value="1"/>
</dbReference>
<dbReference type="Pfam" id="PF00370">
    <property type="entry name" value="FGGY_N"/>
    <property type="match status" value="1"/>
</dbReference>
<dbReference type="PIRSF" id="PIRSF000538">
    <property type="entry name" value="GlpK"/>
    <property type="match status" value="1"/>
</dbReference>
<dbReference type="SUPFAM" id="SSF53067">
    <property type="entry name" value="Actin-like ATPase domain"/>
    <property type="match status" value="2"/>
</dbReference>
<dbReference type="PROSITE" id="PS00445">
    <property type="entry name" value="FGGY_KINASES_2"/>
    <property type="match status" value="1"/>
</dbReference>